<evidence type="ECO:0000255" key="1">
    <source>
        <dbReference type="HAMAP-Rule" id="MF_03027"/>
    </source>
</evidence>
<evidence type="ECO:0000256" key="2">
    <source>
        <dbReference type="SAM" id="MobiDB-lite"/>
    </source>
</evidence>
<evidence type="ECO:0000305" key="3"/>
<name>BOP1_DROME</name>
<comment type="function">
    <text evidence="1">Required for maturation of ribosomal RNAs and formation of the large ribosomal subunit.</text>
</comment>
<comment type="subcellular location">
    <subcellularLocation>
        <location evidence="1">Nucleus</location>
        <location evidence="1">Nucleolus</location>
    </subcellularLocation>
    <subcellularLocation>
        <location evidence="1">Nucleus</location>
        <location evidence="1">Nucleoplasm</location>
    </subcellularLocation>
</comment>
<comment type="similarity">
    <text evidence="1">Belongs to the WD repeat BOP1/ERB1 family.</text>
</comment>
<comment type="sequence caution" evidence="3">
    <conflict type="miscellaneous discrepancy">
        <sequence resource="EMBL-CDS" id="AAO41419"/>
    </conflict>
    <text>Probable cloning artifact.</text>
</comment>
<sequence length="784" mass="90444">MTKKLALKRRGKDSEPTNEVVASSEASENEEEEEDLLQAVKDPGEDSTDDEGIDQEYHSDSSEELQFESDEEGNYLGRKQSSSAEEDEESSDEEDNEEEESTDGEEVEDEEKDSKSKQTDDKPSGSGAASKKALTAELPKRDSSKPEYQDSDTSDEEDIRNTVGNIPMHWYDEYKHIGYDWDAKKIIKPPQGDQIDEFLRKIEDPDFWRTVKDPLTGQDVRLTDEDIALIKRIVSGRIPNKDHEEYEPWIEWFTSEVEKMPIKNVPDHKRSFLPSVSEKKRVSRMVHALKMGWMKTTEEVEREKQAKRGPKFYMLWETDTSREHMRRIHDPVSAPKRDLPGHAESYNPPPEYLFDAKETKEWLKLKDEPHKRKLHFMPQKFKSLREVPAYSRYLRERFLRCLDLYLCPRAKRVKLNIDAEYLIPKLPSPRDLQPFPTVESMVYRGHTDLVRSVSVEPKGEYLVSGSDDKTVKIWEIATGRCIRTIETDEVVRCVAWCPNPKLSIIAVATGNRLLLVNPKVGDKVLVKKTDDLLAEAPSQDVIESERIKTAVQWSNAEADEQEKGVRVVITHFKPIRQVTWHGRGDYLATVMPEGANRSALIHQLSKRRSQIPFSKSKGLIQFVLFHPVKPCFFVATQHNIRIYDLVKQELVKKLLTNSKWISGMSIHPKGDNLLVSTYDKKMLWFDLDLSTKPYQTMRLHRNAVRSVAFHLRYPLFASGSDDQAVIVSHGMVYNDLLQNPLIVPLKKLQTHEKRDEFGVLDVNWHPVQPWVFSTGADSTIRLYT</sequence>
<organism>
    <name type="scientific">Drosophila melanogaster</name>
    <name type="common">Fruit fly</name>
    <dbReference type="NCBI Taxonomy" id="7227"/>
    <lineage>
        <taxon>Eukaryota</taxon>
        <taxon>Metazoa</taxon>
        <taxon>Ecdysozoa</taxon>
        <taxon>Arthropoda</taxon>
        <taxon>Hexapoda</taxon>
        <taxon>Insecta</taxon>
        <taxon>Pterygota</taxon>
        <taxon>Neoptera</taxon>
        <taxon>Endopterygota</taxon>
        <taxon>Diptera</taxon>
        <taxon>Brachycera</taxon>
        <taxon>Muscomorpha</taxon>
        <taxon>Ephydroidea</taxon>
        <taxon>Drosophilidae</taxon>
        <taxon>Drosophila</taxon>
        <taxon>Sophophora</taxon>
    </lineage>
</organism>
<dbReference type="EMBL" id="AE013599">
    <property type="protein sequence ID" value="AAF57786.1"/>
    <property type="molecule type" value="Genomic_DNA"/>
</dbReference>
<dbReference type="EMBL" id="AL035311">
    <property type="protein sequence ID" value="CAA22953.1"/>
    <property type="molecule type" value="Genomic_DNA"/>
</dbReference>
<dbReference type="EMBL" id="AY069513">
    <property type="protein sequence ID" value="AAL39658.1"/>
    <property type="molecule type" value="mRNA"/>
</dbReference>
<dbReference type="EMBL" id="BT003755">
    <property type="protein sequence ID" value="AAO41419.1"/>
    <property type="status" value="ALT_SEQ"/>
    <property type="molecule type" value="mRNA"/>
</dbReference>
<dbReference type="RefSeq" id="NP_611270.1">
    <property type="nucleotide sequence ID" value="NM_137426.4"/>
</dbReference>
<dbReference type="SMR" id="Q7K0Y1"/>
<dbReference type="BioGRID" id="62721">
    <property type="interactions" value="14"/>
</dbReference>
<dbReference type="FunCoup" id="Q7K0Y1">
    <property type="interactions" value="1349"/>
</dbReference>
<dbReference type="IntAct" id="Q7K0Y1">
    <property type="interactions" value="28"/>
</dbReference>
<dbReference type="STRING" id="7227.FBpp0088519"/>
<dbReference type="GlyGen" id="Q7K0Y1">
    <property type="glycosylation" value="1 site"/>
</dbReference>
<dbReference type="PaxDb" id="7227-FBpp0088519"/>
<dbReference type="DNASU" id="37036"/>
<dbReference type="EnsemblMetazoa" id="FBtr0089550">
    <property type="protein sequence ID" value="FBpp0088519"/>
    <property type="gene ID" value="FBgn0028744"/>
</dbReference>
<dbReference type="GeneID" id="37036"/>
<dbReference type="KEGG" id="dme:Dmel_CG5033"/>
<dbReference type="UCSC" id="CG5033-RA">
    <property type="organism name" value="d. melanogaster"/>
</dbReference>
<dbReference type="UCSC" id="CG5033-RB">
    <property type="organism name" value="d. melanogaster"/>
</dbReference>
<dbReference type="AGR" id="FB:FBgn0028744"/>
<dbReference type="FlyBase" id="FBgn0028744">
    <property type="gene designation" value="CG5033"/>
</dbReference>
<dbReference type="VEuPathDB" id="VectorBase:FBgn0028744"/>
<dbReference type="eggNOG" id="KOG0650">
    <property type="taxonomic scope" value="Eukaryota"/>
</dbReference>
<dbReference type="GeneTree" id="ENSGT00390000018422"/>
<dbReference type="HOGENOM" id="CLU_011390_2_0_1"/>
<dbReference type="InParanoid" id="Q7K0Y1"/>
<dbReference type="OMA" id="MRPAKGE"/>
<dbReference type="OrthoDB" id="5571054at2759"/>
<dbReference type="PhylomeDB" id="Q7K0Y1"/>
<dbReference type="Reactome" id="R-DME-6791226">
    <property type="pathway name" value="Major pathway of rRNA processing in the nucleolus and cytosol"/>
</dbReference>
<dbReference type="BioGRID-ORCS" id="37036">
    <property type="hits" value="0 hits in 1 CRISPR screen"/>
</dbReference>
<dbReference type="GenomeRNAi" id="37036"/>
<dbReference type="PRO" id="PR:Q7K0Y1"/>
<dbReference type="Proteomes" id="UP000000803">
    <property type="component" value="Chromosome 2R"/>
</dbReference>
<dbReference type="Bgee" id="FBgn0028744">
    <property type="expression patterns" value="Expressed in posterior endoderm (Drosophila) and 72 other cell types or tissues"/>
</dbReference>
<dbReference type="GO" id="GO:0005654">
    <property type="term" value="C:nucleoplasm"/>
    <property type="evidence" value="ECO:0007669"/>
    <property type="project" value="UniProtKB-SubCell"/>
</dbReference>
<dbReference type="GO" id="GO:0070545">
    <property type="term" value="C:PeBoW complex"/>
    <property type="evidence" value="ECO:0000318"/>
    <property type="project" value="GO_Central"/>
</dbReference>
<dbReference type="GO" id="GO:0030687">
    <property type="term" value="C:preribosome, large subunit precursor"/>
    <property type="evidence" value="ECO:0000318"/>
    <property type="project" value="GO_Central"/>
</dbReference>
<dbReference type="GO" id="GO:0043021">
    <property type="term" value="F:ribonucleoprotein complex binding"/>
    <property type="evidence" value="ECO:0000318"/>
    <property type="project" value="GO_Central"/>
</dbReference>
<dbReference type="GO" id="GO:0000466">
    <property type="term" value="P:maturation of 5.8S rRNA from tricistronic rRNA transcript (SSU-rRNA, 5.8S rRNA, LSU-rRNA)"/>
    <property type="evidence" value="ECO:0007669"/>
    <property type="project" value="UniProtKB-UniRule"/>
</dbReference>
<dbReference type="GO" id="GO:0000463">
    <property type="term" value="P:maturation of LSU-rRNA from tricistronic rRNA transcript (SSU-rRNA, 5.8S rRNA, LSU-rRNA)"/>
    <property type="evidence" value="ECO:0000318"/>
    <property type="project" value="GO_Central"/>
</dbReference>
<dbReference type="GO" id="GO:0035206">
    <property type="term" value="P:regulation of hemocyte proliferation"/>
    <property type="evidence" value="ECO:0000315"/>
    <property type="project" value="FlyBase"/>
</dbReference>
<dbReference type="CDD" id="cd00200">
    <property type="entry name" value="WD40"/>
    <property type="match status" value="1"/>
</dbReference>
<dbReference type="FunFam" id="2.130.10.10:FF:000061">
    <property type="entry name" value="Ribosome biogenesis protein BOP1 homolog"/>
    <property type="match status" value="1"/>
</dbReference>
<dbReference type="Gene3D" id="2.130.10.10">
    <property type="entry name" value="YVTN repeat-like/Quinoprotein amine dehydrogenase"/>
    <property type="match status" value="1"/>
</dbReference>
<dbReference type="HAMAP" id="MF_03027">
    <property type="entry name" value="BOP1"/>
    <property type="match status" value="1"/>
</dbReference>
<dbReference type="InterPro" id="IPR028598">
    <property type="entry name" value="BOP1/Erb1"/>
</dbReference>
<dbReference type="InterPro" id="IPR012953">
    <property type="entry name" value="BOP1_N_dom"/>
</dbReference>
<dbReference type="InterPro" id="IPR015943">
    <property type="entry name" value="WD40/YVTN_repeat-like_dom_sf"/>
</dbReference>
<dbReference type="InterPro" id="IPR019775">
    <property type="entry name" value="WD40_repeat_CS"/>
</dbReference>
<dbReference type="InterPro" id="IPR036322">
    <property type="entry name" value="WD40_repeat_dom_sf"/>
</dbReference>
<dbReference type="InterPro" id="IPR001680">
    <property type="entry name" value="WD40_rpt"/>
</dbReference>
<dbReference type="PANTHER" id="PTHR17605:SF0">
    <property type="entry name" value="RIBOSOME BIOGENESIS PROTEIN BOP1"/>
    <property type="match status" value="1"/>
</dbReference>
<dbReference type="PANTHER" id="PTHR17605">
    <property type="entry name" value="RIBOSOME BIOGENESIS PROTEIN BOP1 BLOCK OF PROLIFERATION 1 PROTEIN"/>
    <property type="match status" value="1"/>
</dbReference>
<dbReference type="Pfam" id="PF08145">
    <property type="entry name" value="BOP1NT"/>
    <property type="match status" value="1"/>
</dbReference>
<dbReference type="Pfam" id="PF00400">
    <property type="entry name" value="WD40"/>
    <property type="match status" value="3"/>
</dbReference>
<dbReference type="SMART" id="SM01035">
    <property type="entry name" value="BOP1NT"/>
    <property type="match status" value="1"/>
</dbReference>
<dbReference type="SMART" id="SM00320">
    <property type="entry name" value="WD40"/>
    <property type="match status" value="7"/>
</dbReference>
<dbReference type="SUPFAM" id="SSF50978">
    <property type="entry name" value="WD40 repeat-like"/>
    <property type="match status" value="1"/>
</dbReference>
<dbReference type="PROSITE" id="PS00678">
    <property type="entry name" value="WD_REPEATS_1"/>
    <property type="match status" value="1"/>
</dbReference>
<dbReference type="PROSITE" id="PS50082">
    <property type="entry name" value="WD_REPEATS_2"/>
    <property type="match status" value="1"/>
</dbReference>
<dbReference type="PROSITE" id="PS50294">
    <property type="entry name" value="WD_REPEATS_REGION"/>
    <property type="match status" value="2"/>
</dbReference>
<keyword id="KW-0539">Nucleus</keyword>
<keyword id="KW-1185">Reference proteome</keyword>
<keyword id="KW-0677">Repeat</keyword>
<keyword id="KW-0690">Ribosome biogenesis</keyword>
<keyword id="KW-0698">rRNA processing</keyword>
<keyword id="KW-0853">WD repeat</keyword>
<feature type="chain" id="PRO_0000370397" description="Ribosome biogenesis protein BOP1 homolog">
    <location>
        <begin position="1"/>
        <end position="784"/>
    </location>
</feature>
<feature type="repeat" description="WD 1">
    <location>
        <begin position="445"/>
        <end position="486"/>
    </location>
</feature>
<feature type="repeat" description="WD 2">
    <location>
        <begin position="488"/>
        <end position="526"/>
    </location>
</feature>
<feature type="repeat" description="WD 3">
    <location>
        <begin position="570"/>
        <end position="612"/>
    </location>
</feature>
<feature type="repeat" description="WD 4">
    <location>
        <begin position="615"/>
        <end position="653"/>
    </location>
</feature>
<feature type="repeat" description="WD 5">
    <location>
        <begin position="656"/>
        <end position="695"/>
    </location>
</feature>
<feature type="repeat" description="WD 6">
    <location>
        <begin position="699"/>
        <end position="738"/>
    </location>
</feature>
<feature type="repeat" description="WD 7">
    <location>
        <begin position="754"/>
        <end position="784"/>
    </location>
</feature>
<feature type="region of interest" description="Disordered" evidence="2">
    <location>
        <begin position="1"/>
        <end position="159"/>
    </location>
</feature>
<feature type="compositionally biased region" description="Basic residues" evidence="2">
    <location>
        <begin position="1"/>
        <end position="11"/>
    </location>
</feature>
<feature type="compositionally biased region" description="Acidic residues" evidence="2">
    <location>
        <begin position="27"/>
        <end position="36"/>
    </location>
</feature>
<feature type="compositionally biased region" description="Acidic residues" evidence="2">
    <location>
        <begin position="45"/>
        <end position="54"/>
    </location>
</feature>
<feature type="compositionally biased region" description="Acidic residues" evidence="2">
    <location>
        <begin position="62"/>
        <end position="73"/>
    </location>
</feature>
<feature type="compositionally biased region" description="Acidic residues" evidence="2">
    <location>
        <begin position="84"/>
        <end position="111"/>
    </location>
</feature>
<feature type="compositionally biased region" description="Basic and acidic residues" evidence="2">
    <location>
        <begin position="112"/>
        <end position="123"/>
    </location>
</feature>
<feature type="compositionally biased region" description="Basic and acidic residues" evidence="2">
    <location>
        <begin position="138"/>
        <end position="148"/>
    </location>
</feature>
<feature type="compositionally biased region" description="Acidic residues" evidence="2">
    <location>
        <begin position="149"/>
        <end position="158"/>
    </location>
</feature>
<protein>
    <recommendedName>
        <fullName evidence="1">Ribosome biogenesis protein BOP1 homolog</fullName>
    </recommendedName>
</protein>
<reference key="1">
    <citation type="journal article" date="2000" name="Science">
        <title>The genome sequence of Drosophila melanogaster.</title>
        <authorList>
            <person name="Adams M.D."/>
            <person name="Celniker S.E."/>
            <person name="Holt R.A."/>
            <person name="Evans C.A."/>
            <person name="Gocayne J.D."/>
            <person name="Amanatides P.G."/>
            <person name="Scherer S.E."/>
            <person name="Li P.W."/>
            <person name="Hoskins R.A."/>
            <person name="Galle R.F."/>
            <person name="George R.A."/>
            <person name="Lewis S.E."/>
            <person name="Richards S."/>
            <person name="Ashburner M."/>
            <person name="Henderson S.N."/>
            <person name="Sutton G.G."/>
            <person name="Wortman J.R."/>
            <person name="Yandell M.D."/>
            <person name="Zhang Q."/>
            <person name="Chen L.X."/>
            <person name="Brandon R.C."/>
            <person name="Rogers Y.-H.C."/>
            <person name="Blazej R.G."/>
            <person name="Champe M."/>
            <person name="Pfeiffer B.D."/>
            <person name="Wan K.H."/>
            <person name="Doyle C."/>
            <person name="Baxter E.G."/>
            <person name="Helt G."/>
            <person name="Nelson C.R."/>
            <person name="Miklos G.L.G."/>
            <person name="Abril J.F."/>
            <person name="Agbayani A."/>
            <person name="An H.-J."/>
            <person name="Andrews-Pfannkoch C."/>
            <person name="Baldwin D."/>
            <person name="Ballew R.M."/>
            <person name="Basu A."/>
            <person name="Baxendale J."/>
            <person name="Bayraktaroglu L."/>
            <person name="Beasley E.M."/>
            <person name="Beeson K.Y."/>
            <person name="Benos P.V."/>
            <person name="Berman B.P."/>
            <person name="Bhandari D."/>
            <person name="Bolshakov S."/>
            <person name="Borkova D."/>
            <person name="Botchan M.R."/>
            <person name="Bouck J."/>
            <person name="Brokstein P."/>
            <person name="Brottier P."/>
            <person name="Burtis K.C."/>
            <person name="Busam D.A."/>
            <person name="Butler H."/>
            <person name="Cadieu E."/>
            <person name="Center A."/>
            <person name="Chandra I."/>
            <person name="Cherry J.M."/>
            <person name="Cawley S."/>
            <person name="Dahlke C."/>
            <person name="Davenport L.B."/>
            <person name="Davies P."/>
            <person name="de Pablos B."/>
            <person name="Delcher A."/>
            <person name="Deng Z."/>
            <person name="Mays A.D."/>
            <person name="Dew I."/>
            <person name="Dietz S.M."/>
            <person name="Dodson K."/>
            <person name="Doup L.E."/>
            <person name="Downes M."/>
            <person name="Dugan-Rocha S."/>
            <person name="Dunkov B.C."/>
            <person name="Dunn P."/>
            <person name="Durbin K.J."/>
            <person name="Evangelista C.C."/>
            <person name="Ferraz C."/>
            <person name="Ferriera S."/>
            <person name="Fleischmann W."/>
            <person name="Fosler C."/>
            <person name="Gabrielian A.E."/>
            <person name="Garg N.S."/>
            <person name="Gelbart W.M."/>
            <person name="Glasser K."/>
            <person name="Glodek A."/>
            <person name="Gong F."/>
            <person name="Gorrell J.H."/>
            <person name="Gu Z."/>
            <person name="Guan P."/>
            <person name="Harris M."/>
            <person name="Harris N.L."/>
            <person name="Harvey D.A."/>
            <person name="Heiman T.J."/>
            <person name="Hernandez J.R."/>
            <person name="Houck J."/>
            <person name="Hostin D."/>
            <person name="Houston K.A."/>
            <person name="Howland T.J."/>
            <person name="Wei M.-H."/>
            <person name="Ibegwam C."/>
            <person name="Jalali M."/>
            <person name="Kalush F."/>
            <person name="Karpen G.H."/>
            <person name="Ke Z."/>
            <person name="Kennison J.A."/>
            <person name="Ketchum K.A."/>
            <person name="Kimmel B.E."/>
            <person name="Kodira C.D."/>
            <person name="Kraft C.L."/>
            <person name="Kravitz S."/>
            <person name="Kulp D."/>
            <person name="Lai Z."/>
            <person name="Lasko P."/>
            <person name="Lei Y."/>
            <person name="Levitsky A.A."/>
            <person name="Li J.H."/>
            <person name="Li Z."/>
            <person name="Liang Y."/>
            <person name="Lin X."/>
            <person name="Liu X."/>
            <person name="Mattei B."/>
            <person name="McIntosh T.C."/>
            <person name="McLeod M.P."/>
            <person name="McPherson D."/>
            <person name="Merkulov G."/>
            <person name="Milshina N.V."/>
            <person name="Mobarry C."/>
            <person name="Morris J."/>
            <person name="Moshrefi A."/>
            <person name="Mount S.M."/>
            <person name="Moy M."/>
            <person name="Murphy B."/>
            <person name="Murphy L."/>
            <person name="Muzny D.M."/>
            <person name="Nelson D.L."/>
            <person name="Nelson D.R."/>
            <person name="Nelson K.A."/>
            <person name="Nixon K."/>
            <person name="Nusskern D.R."/>
            <person name="Pacleb J.M."/>
            <person name="Palazzolo M."/>
            <person name="Pittman G.S."/>
            <person name="Pan S."/>
            <person name="Pollard J."/>
            <person name="Puri V."/>
            <person name="Reese M.G."/>
            <person name="Reinert K."/>
            <person name="Remington K."/>
            <person name="Saunders R.D.C."/>
            <person name="Scheeler F."/>
            <person name="Shen H."/>
            <person name="Shue B.C."/>
            <person name="Siden-Kiamos I."/>
            <person name="Simpson M."/>
            <person name="Skupski M.P."/>
            <person name="Smith T.J."/>
            <person name="Spier E."/>
            <person name="Spradling A.C."/>
            <person name="Stapleton M."/>
            <person name="Strong R."/>
            <person name="Sun E."/>
            <person name="Svirskas R."/>
            <person name="Tector C."/>
            <person name="Turner R."/>
            <person name="Venter E."/>
            <person name="Wang A.H."/>
            <person name="Wang X."/>
            <person name="Wang Z.-Y."/>
            <person name="Wassarman D.A."/>
            <person name="Weinstock G.M."/>
            <person name="Weissenbach J."/>
            <person name="Williams S.M."/>
            <person name="Woodage T."/>
            <person name="Worley K.C."/>
            <person name="Wu D."/>
            <person name="Yang S."/>
            <person name="Yao Q.A."/>
            <person name="Ye J."/>
            <person name="Yeh R.-F."/>
            <person name="Zaveri J.S."/>
            <person name="Zhan M."/>
            <person name="Zhang G."/>
            <person name="Zhao Q."/>
            <person name="Zheng L."/>
            <person name="Zheng X.H."/>
            <person name="Zhong F.N."/>
            <person name="Zhong W."/>
            <person name="Zhou X."/>
            <person name="Zhu S.C."/>
            <person name="Zhu X."/>
            <person name="Smith H.O."/>
            <person name="Gibbs R.A."/>
            <person name="Myers E.W."/>
            <person name="Rubin G.M."/>
            <person name="Venter J.C."/>
        </authorList>
    </citation>
    <scope>NUCLEOTIDE SEQUENCE [LARGE SCALE GENOMIC DNA]</scope>
    <source>
        <strain>Berkeley</strain>
    </source>
</reference>
<reference key="2">
    <citation type="journal article" date="2002" name="Genome Biol.">
        <title>Annotation of the Drosophila melanogaster euchromatic genome: a systematic review.</title>
        <authorList>
            <person name="Misra S."/>
            <person name="Crosby M.A."/>
            <person name="Mungall C.J."/>
            <person name="Matthews B.B."/>
            <person name="Campbell K.S."/>
            <person name="Hradecky P."/>
            <person name="Huang Y."/>
            <person name="Kaminker J.S."/>
            <person name="Millburn G.H."/>
            <person name="Prochnik S.E."/>
            <person name="Smith C.D."/>
            <person name="Tupy J.L."/>
            <person name="Whitfield E.J."/>
            <person name="Bayraktaroglu L."/>
            <person name="Berman B.P."/>
            <person name="Bettencourt B.R."/>
            <person name="Celniker S.E."/>
            <person name="de Grey A.D.N.J."/>
            <person name="Drysdale R.A."/>
            <person name="Harris N.L."/>
            <person name="Richter J."/>
            <person name="Russo S."/>
            <person name="Schroeder A.J."/>
            <person name="Shu S.Q."/>
            <person name="Stapleton M."/>
            <person name="Yamada C."/>
            <person name="Ashburner M."/>
            <person name="Gelbart W.M."/>
            <person name="Rubin G.M."/>
            <person name="Lewis S.E."/>
        </authorList>
    </citation>
    <scope>GENOME REANNOTATION</scope>
    <source>
        <strain>Berkeley</strain>
    </source>
</reference>
<reference key="3">
    <citation type="journal article" date="2000" name="Science">
        <title>From sequence to chromosome: the tip of the X chromosome of D. melanogaster.</title>
        <authorList>
            <person name="Benos P.V."/>
            <person name="Gatt M.K."/>
            <person name="Ashburner M."/>
            <person name="Murphy L."/>
            <person name="Harris D."/>
            <person name="Barrell B.G."/>
            <person name="Ferraz C."/>
            <person name="Vidal S."/>
            <person name="Brun C."/>
            <person name="Demailles J."/>
            <person name="Cadieu E."/>
            <person name="Dreano S."/>
            <person name="Gloux S."/>
            <person name="Lelaure V."/>
            <person name="Mottier S."/>
            <person name="Galibert F."/>
            <person name="Borkova D."/>
            <person name="Minana B."/>
            <person name="Kafatos F.C."/>
            <person name="Louis C."/>
            <person name="Siden-Kiamos I."/>
            <person name="Bolshakov S."/>
            <person name="Papagiannakis G."/>
            <person name="Spanos L."/>
            <person name="Cox S."/>
            <person name="Madueno E."/>
            <person name="de Pablos B."/>
            <person name="Modolell J."/>
            <person name="Peter A."/>
            <person name="Schoettler P."/>
            <person name="Werner M."/>
            <person name="Mourkioti F."/>
            <person name="Beinert N."/>
            <person name="Dowe G."/>
            <person name="Schaefer U."/>
            <person name="Jaeckle H."/>
            <person name="Bucheton A."/>
            <person name="Callister D.M."/>
            <person name="Campbell L.A."/>
            <person name="Darlamitsou A."/>
            <person name="Henderson N.S."/>
            <person name="McMillan P.J."/>
            <person name="Salles C."/>
            <person name="Tait E.A."/>
            <person name="Valenti P."/>
            <person name="Saunders R.D.C."/>
            <person name="Glover D.M."/>
        </authorList>
    </citation>
    <scope>NUCLEOTIDE SEQUENCE [LARGE SCALE GENOMIC DNA]</scope>
    <source>
        <strain>Oregon-R</strain>
    </source>
</reference>
<reference key="4">
    <citation type="journal article" date="2002" name="Genome Biol.">
        <title>A Drosophila full-length cDNA resource.</title>
        <authorList>
            <person name="Stapleton M."/>
            <person name="Carlson J.W."/>
            <person name="Brokstein P."/>
            <person name="Yu C."/>
            <person name="Champe M."/>
            <person name="George R.A."/>
            <person name="Guarin H."/>
            <person name="Kronmiller B."/>
            <person name="Pacleb J.M."/>
            <person name="Park S."/>
            <person name="Wan K.H."/>
            <person name="Rubin G.M."/>
            <person name="Celniker S.E."/>
        </authorList>
    </citation>
    <scope>NUCLEOTIDE SEQUENCE [LARGE SCALE MRNA]</scope>
    <source>
        <strain>Berkeley</strain>
        <tissue>Embryo</tissue>
    </source>
</reference>
<reference key="5">
    <citation type="submission" date="2003-02" db="EMBL/GenBank/DDBJ databases">
        <authorList>
            <person name="Stapleton M."/>
            <person name="Brokstein P."/>
            <person name="Hong L."/>
            <person name="Agbayani A."/>
            <person name="Carlson J.W."/>
            <person name="Champe M."/>
            <person name="Chavez C."/>
            <person name="Dorsett V."/>
            <person name="Dresnek D."/>
            <person name="Farfan D."/>
            <person name="Frise E."/>
            <person name="George R.A."/>
            <person name="Gonzalez M."/>
            <person name="Guarin H."/>
            <person name="Kronmiller B."/>
            <person name="Li P.W."/>
            <person name="Liao G."/>
            <person name="Miranda A."/>
            <person name="Mungall C.J."/>
            <person name="Nunoo J."/>
            <person name="Pacleb J.M."/>
            <person name="Paragas V."/>
            <person name="Park S."/>
            <person name="Patel S."/>
            <person name="Phouanenavong S."/>
            <person name="Wan K.H."/>
            <person name="Yu C."/>
            <person name="Lewis S.E."/>
            <person name="Rubin G.M."/>
            <person name="Celniker S.E."/>
        </authorList>
    </citation>
    <scope>NUCLEOTIDE SEQUENCE [LARGE SCALE MRNA] OF 35-784</scope>
    <source>
        <strain>Berkeley</strain>
        <tissue>Embryo</tissue>
    </source>
</reference>
<gene>
    <name type="ORF">CG5033</name>
</gene>
<accession>Q7K0Y1</accession>
<accession>Q7JQW4</accession>
<proteinExistence type="evidence at transcript level"/>